<sequence length="500" mass="55017">MGTARWLALGSLFALAGLLEGRLVGEEEAGFGECDKFFYAGTPPAGLAADSHVKICQRAEGAERFATLYSTRDRIPVYSAFRAPRPAPGGAEQRWLVEPQIDDPNSNLEEAINEAEAITSVNSLGSKQALNTDYLDSDYQRGQLYPFSLSSDVQVATFTLTNSAPMTQSFQERWYVNLHSLMDRALTPQCGSGEDLYILTGTVPSDYRVKDKVAVPEFVWLAACCAVPGGGWAMGFVKHTRDSDIIEDVMVKDLQKLLPFNPQLFQNNCGETEQDTEKMKKILEVVNQIQDEERMVQSQKSSSPLSSTRSKRSTLLPPEASEGSSSFLGKLMGFIATPFIKLFQLIYYLVVAILKNIVYFLWCVTKQVINGIESCLYRLGSATISYFMAIGEELVSIPWKVLKVVAKVIRALLRILCCLLKAICRVLSIPVRVLVDVATFPVYTMGAIPIVCKDIALGLGGTVSLLFDTAFGTLGGLFQVVFSVCKRIGYKVTFDNSGEL</sequence>
<proteinExistence type="evidence at protein level"/>
<reference key="1">
    <citation type="journal article" date="1998" name="DNA Res.">
        <title>Prediction of the coding sequences of unidentified human genes. XII. The complete sequences of 100 new cDNA clones from brain which code for large proteins in vitro.</title>
        <authorList>
            <person name="Nagase T."/>
            <person name="Ishikawa K."/>
            <person name="Suyama M."/>
            <person name="Kikuno R."/>
            <person name="Hirosawa M."/>
            <person name="Miyajima N."/>
            <person name="Tanaka A."/>
            <person name="Kotani H."/>
            <person name="Nomura N."/>
            <person name="Ohara O."/>
        </authorList>
    </citation>
    <scope>NUCLEOTIDE SEQUENCE [LARGE SCALE MRNA]</scope>
    <source>
        <tissue>Brain</tissue>
    </source>
</reference>
<reference key="2">
    <citation type="journal article" date="2004" name="Nat. Genet.">
        <title>Complete sequencing and characterization of 21,243 full-length human cDNAs.</title>
        <authorList>
            <person name="Ota T."/>
            <person name="Suzuki Y."/>
            <person name="Nishikawa T."/>
            <person name="Otsuki T."/>
            <person name="Sugiyama T."/>
            <person name="Irie R."/>
            <person name="Wakamatsu A."/>
            <person name="Hayashi K."/>
            <person name="Sato H."/>
            <person name="Nagai K."/>
            <person name="Kimura K."/>
            <person name="Makita H."/>
            <person name="Sekine M."/>
            <person name="Obayashi M."/>
            <person name="Nishi T."/>
            <person name="Shibahara T."/>
            <person name="Tanaka T."/>
            <person name="Ishii S."/>
            <person name="Yamamoto J."/>
            <person name="Saito K."/>
            <person name="Kawai Y."/>
            <person name="Isono Y."/>
            <person name="Nakamura Y."/>
            <person name="Nagahari K."/>
            <person name="Murakami K."/>
            <person name="Yasuda T."/>
            <person name="Iwayanagi T."/>
            <person name="Wagatsuma M."/>
            <person name="Shiratori A."/>
            <person name="Sudo H."/>
            <person name="Hosoiri T."/>
            <person name="Kaku Y."/>
            <person name="Kodaira H."/>
            <person name="Kondo H."/>
            <person name="Sugawara M."/>
            <person name="Takahashi M."/>
            <person name="Kanda K."/>
            <person name="Yokoi T."/>
            <person name="Furuya T."/>
            <person name="Kikkawa E."/>
            <person name="Omura Y."/>
            <person name="Abe K."/>
            <person name="Kamihara K."/>
            <person name="Katsuta N."/>
            <person name="Sato K."/>
            <person name="Tanikawa M."/>
            <person name="Yamazaki M."/>
            <person name="Ninomiya K."/>
            <person name="Ishibashi T."/>
            <person name="Yamashita H."/>
            <person name="Murakawa K."/>
            <person name="Fujimori K."/>
            <person name="Tanai H."/>
            <person name="Kimata M."/>
            <person name="Watanabe M."/>
            <person name="Hiraoka S."/>
            <person name="Chiba Y."/>
            <person name="Ishida S."/>
            <person name="Ono Y."/>
            <person name="Takiguchi S."/>
            <person name="Watanabe S."/>
            <person name="Yosida M."/>
            <person name="Hotuta T."/>
            <person name="Kusano J."/>
            <person name="Kanehori K."/>
            <person name="Takahashi-Fujii A."/>
            <person name="Hara H."/>
            <person name="Tanase T.-O."/>
            <person name="Nomura Y."/>
            <person name="Togiya S."/>
            <person name="Komai F."/>
            <person name="Hara R."/>
            <person name="Takeuchi K."/>
            <person name="Arita M."/>
            <person name="Imose N."/>
            <person name="Musashino K."/>
            <person name="Yuuki H."/>
            <person name="Oshima A."/>
            <person name="Sasaki N."/>
            <person name="Aotsuka S."/>
            <person name="Yoshikawa Y."/>
            <person name="Matsunawa H."/>
            <person name="Ichihara T."/>
            <person name="Shiohata N."/>
            <person name="Sano S."/>
            <person name="Moriya S."/>
            <person name="Momiyama H."/>
            <person name="Satoh N."/>
            <person name="Takami S."/>
            <person name="Terashima Y."/>
            <person name="Suzuki O."/>
            <person name="Nakagawa S."/>
            <person name="Senoh A."/>
            <person name="Mizoguchi H."/>
            <person name="Goto Y."/>
            <person name="Shimizu F."/>
            <person name="Wakebe H."/>
            <person name="Hishigaki H."/>
            <person name="Watanabe T."/>
            <person name="Sugiyama A."/>
            <person name="Takemoto M."/>
            <person name="Kawakami B."/>
            <person name="Yamazaki M."/>
            <person name="Watanabe K."/>
            <person name="Kumagai A."/>
            <person name="Itakura S."/>
            <person name="Fukuzumi Y."/>
            <person name="Fujimori Y."/>
            <person name="Komiyama M."/>
            <person name="Tashiro H."/>
            <person name="Tanigami A."/>
            <person name="Fujiwara T."/>
            <person name="Ono T."/>
            <person name="Yamada K."/>
            <person name="Fujii Y."/>
            <person name="Ozaki K."/>
            <person name="Hirao M."/>
            <person name="Ohmori Y."/>
            <person name="Kawabata A."/>
            <person name="Hikiji T."/>
            <person name="Kobatake N."/>
            <person name="Inagaki H."/>
            <person name="Ikema Y."/>
            <person name="Okamoto S."/>
            <person name="Okitani R."/>
            <person name="Kawakami T."/>
            <person name="Noguchi S."/>
            <person name="Itoh T."/>
            <person name="Shigeta K."/>
            <person name="Senba T."/>
            <person name="Matsumura K."/>
            <person name="Nakajima Y."/>
            <person name="Mizuno T."/>
            <person name="Morinaga M."/>
            <person name="Sasaki M."/>
            <person name="Togashi T."/>
            <person name="Oyama M."/>
            <person name="Hata H."/>
            <person name="Watanabe M."/>
            <person name="Komatsu T."/>
            <person name="Mizushima-Sugano J."/>
            <person name="Satoh T."/>
            <person name="Shirai Y."/>
            <person name="Takahashi Y."/>
            <person name="Nakagawa K."/>
            <person name="Okumura K."/>
            <person name="Nagase T."/>
            <person name="Nomura N."/>
            <person name="Kikuchi H."/>
            <person name="Masuho Y."/>
            <person name="Yamashita R."/>
            <person name="Nakai K."/>
            <person name="Yada T."/>
            <person name="Nakamura Y."/>
            <person name="Ohara O."/>
            <person name="Isogai T."/>
            <person name="Sugano S."/>
        </authorList>
    </citation>
    <scope>NUCLEOTIDE SEQUENCE [LARGE SCALE MRNA]</scope>
    <source>
        <tissue>Placenta</tissue>
    </source>
</reference>
<reference key="3">
    <citation type="journal article" date="2004" name="Genome Res.">
        <title>The status, quality, and expansion of the NIH full-length cDNA project: the Mammalian Gene Collection (MGC).</title>
        <authorList>
            <consortium name="The MGC Project Team"/>
        </authorList>
    </citation>
    <scope>NUCLEOTIDE SEQUENCE [LARGE SCALE MRNA]</scope>
    <source>
        <tissue>Brain</tissue>
    </source>
</reference>
<reference key="4">
    <citation type="journal article" date="2002" name="Proteomics">
        <title>Towards complete analysis of the platelet proteome.</title>
        <authorList>
            <person name="O'Neill E.E."/>
            <person name="Brock C.J."/>
            <person name="von Kriegsheim A.F."/>
            <person name="Pearce A.C."/>
            <person name="Dwek R.A."/>
            <person name="Watson S.P."/>
            <person name="Hebestreit H.F."/>
        </authorList>
    </citation>
    <scope>IDENTIFICATION BY MASS SPECTROMETRY</scope>
    <source>
        <tissue>Platelet</tissue>
    </source>
</reference>
<reference key="5">
    <citation type="journal article" date="2009" name="Science">
        <title>Lysine acetylation targets protein complexes and co-regulates major cellular functions.</title>
        <authorList>
            <person name="Choudhary C."/>
            <person name="Kumar C."/>
            <person name="Gnad F."/>
            <person name="Nielsen M.L."/>
            <person name="Rehman M."/>
            <person name="Walther T.C."/>
            <person name="Olsen J.V."/>
            <person name="Mann M."/>
        </authorList>
    </citation>
    <scope>ACETYLATION [LARGE SCALE ANALYSIS] AT LYS-407</scope>
    <scope>IDENTIFICATION BY MASS SPECTROMETRY [LARGE SCALE ANALYSIS]</scope>
</reference>
<reference key="6">
    <citation type="journal article" date="2020" name="Elife">
        <title>Interaction mapping of endoplasmic reticulum ubiquitin ligases identifies modulators of innate immune signalling.</title>
        <authorList>
            <person name="Fenech E.J."/>
            <person name="Lari F."/>
            <person name="Charles P.D."/>
            <person name="Fischer R."/>
            <person name="Laetitia-Thezenas M."/>
            <person name="Bagola K."/>
            <person name="Paton A.W."/>
            <person name="Paton J.C."/>
            <person name="Gyrd-Hansen M."/>
            <person name="Kessler B.M."/>
            <person name="Christianson J.C."/>
        </authorList>
    </citation>
    <scope>FUNCTION</scope>
    <scope>INTERACTION WITH RNF26</scope>
</reference>
<organism>
    <name type="scientific">Homo sapiens</name>
    <name type="common">Human</name>
    <dbReference type="NCBI Taxonomy" id="9606"/>
    <lineage>
        <taxon>Eukaryota</taxon>
        <taxon>Metazoa</taxon>
        <taxon>Chordata</taxon>
        <taxon>Craniata</taxon>
        <taxon>Vertebrata</taxon>
        <taxon>Euteleostomi</taxon>
        <taxon>Mammalia</taxon>
        <taxon>Eutheria</taxon>
        <taxon>Euarchontoglires</taxon>
        <taxon>Primates</taxon>
        <taxon>Haplorrhini</taxon>
        <taxon>Catarrhini</taxon>
        <taxon>Hominidae</taxon>
        <taxon>Homo</taxon>
    </lineage>
</organism>
<accession>O94919</accession>
<accession>A8K6K8</accession>
<accession>Q6GQY5</accession>
<accession>Q8TAQ8</accession>
<feature type="signal peptide" evidence="1">
    <location>
        <begin position="1"/>
        <end position="21"/>
    </location>
</feature>
<feature type="chain" id="PRO_0000019924" description="Endonuclease domain-containing 1 protein">
    <location>
        <begin position="22"/>
        <end position="500"/>
    </location>
</feature>
<feature type="region of interest" description="Disordered" evidence="2">
    <location>
        <begin position="293"/>
        <end position="323"/>
    </location>
</feature>
<feature type="compositionally biased region" description="Low complexity" evidence="2">
    <location>
        <begin position="297"/>
        <end position="317"/>
    </location>
</feature>
<feature type="modified residue" description="N6-acetyllysine" evidence="5">
    <location>
        <position position="407"/>
    </location>
</feature>
<feature type="sequence variant" id="VAR_022044" description="In dbSNP:rs3740862.">
    <original>V</original>
    <variation>M</variation>
    <location>
        <position position="350"/>
    </location>
</feature>
<feature type="sequence variant" id="VAR_022045" description="In dbSNP:rs3740861.">
    <original>G</original>
    <variation>V</variation>
    <location>
        <position position="446"/>
    </location>
</feature>
<feature type="sequence conflict" description="In Ref. 2; BAF84362." evidence="4" ref="2">
    <original>N</original>
    <variation>I</variation>
    <location>
        <position position="113"/>
    </location>
</feature>
<feature type="sequence conflict" description="In Ref. 2; BAF84362." evidence="4" ref="2">
    <original>Q</original>
    <variation>R</variation>
    <location>
        <position position="189"/>
    </location>
</feature>
<evidence type="ECO:0000255" key="1"/>
<evidence type="ECO:0000256" key="2">
    <source>
        <dbReference type="SAM" id="MobiDB-lite"/>
    </source>
</evidence>
<evidence type="ECO:0000269" key="3">
    <source>
    </source>
</evidence>
<evidence type="ECO:0000305" key="4"/>
<evidence type="ECO:0007744" key="5">
    <source>
    </source>
</evidence>
<dbReference type="EC" id="3.1.30.-"/>
<dbReference type="EMBL" id="AB020637">
    <property type="protein sequence ID" value="BAA74853.1"/>
    <property type="status" value="ALT_INIT"/>
    <property type="molecule type" value="mRNA"/>
</dbReference>
<dbReference type="EMBL" id="AK291673">
    <property type="protein sequence ID" value="BAF84362.1"/>
    <property type="molecule type" value="mRNA"/>
</dbReference>
<dbReference type="EMBL" id="BC026191">
    <property type="protein sequence ID" value="AAH26191.1"/>
    <property type="molecule type" value="mRNA"/>
</dbReference>
<dbReference type="EMBL" id="BC071171">
    <property type="protein sequence ID" value="AAH71171.1"/>
    <property type="molecule type" value="mRNA"/>
</dbReference>
<dbReference type="CCDS" id="CCDS41699.1"/>
<dbReference type="RefSeq" id="NP_055851.1">
    <property type="nucleotide sequence ID" value="NM_015036.3"/>
</dbReference>
<dbReference type="SMR" id="O94919"/>
<dbReference type="BioGRID" id="116689">
    <property type="interactions" value="141"/>
</dbReference>
<dbReference type="FunCoup" id="O94919">
    <property type="interactions" value="814"/>
</dbReference>
<dbReference type="IntAct" id="O94919">
    <property type="interactions" value="68"/>
</dbReference>
<dbReference type="MINT" id="O94919"/>
<dbReference type="STRING" id="9606.ENSP00000278505"/>
<dbReference type="GlyGen" id="O94919">
    <property type="glycosylation" value="1 site, 1 O-linked glycan (1 site)"/>
</dbReference>
<dbReference type="iPTMnet" id="O94919"/>
<dbReference type="MetOSite" id="O94919"/>
<dbReference type="PhosphoSitePlus" id="O94919"/>
<dbReference type="SwissPalm" id="O94919"/>
<dbReference type="BioMuta" id="ENDOD1"/>
<dbReference type="OGP" id="O94919"/>
<dbReference type="jPOST" id="O94919"/>
<dbReference type="MassIVE" id="O94919"/>
<dbReference type="PaxDb" id="9606-ENSP00000278505"/>
<dbReference type="PeptideAtlas" id="O94919"/>
<dbReference type="ProteomicsDB" id="50555"/>
<dbReference type="Pumba" id="O94919"/>
<dbReference type="Antibodypedia" id="2196">
    <property type="antibodies" value="93 antibodies from 20 providers"/>
</dbReference>
<dbReference type="DNASU" id="23052"/>
<dbReference type="Ensembl" id="ENST00000278505.5">
    <property type="protein sequence ID" value="ENSP00000278505.4"/>
    <property type="gene ID" value="ENSG00000149218.5"/>
</dbReference>
<dbReference type="GeneID" id="23052"/>
<dbReference type="KEGG" id="hsa:23052"/>
<dbReference type="MANE-Select" id="ENST00000278505.5">
    <property type="protein sequence ID" value="ENSP00000278505.4"/>
    <property type="RefSeq nucleotide sequence ID" value="NM_015036.3"/>
    <property type="RefSeq protein sequence ID" value="NP_055851.1"/>
</dbReference>
<dbReference type="UCSC" id="uc001pfh.4">
    <property type="organism name" value="human"/>
</dbReference>
<dbReference type="AGR" id="HGNC:29129"/>
<dbReference type="CTD" id="23052"/>
<dbReference type="DisGeNET" id="23052"/>
<dbReference type="GeneCards" id="ENDOD1"/>
<dbReference type="HGNC" id="HGNC:29129">
    <property type="gene designation" value="ENDOD1"/>
</dbReference>
<dbReference type="HPA" id="ENSG00000149218">
    <property type="expression patterns" value="Low tissue specificity"/>
</dbReference>
<dbReference type="MIM" id="619568">
    <property type="type" value="gene"/>
</dbReference>
<dbReference type="neXtProt" id="NX_O94919"/>
<dbReference type="OpenTargets" id="ENSG00000149218"/>
<dbReference type="PharmGKB" id="PA143485454"/>
<dbReference type="VEuPathDB" id="HostDB:ENSG00000149218"/>
<dbReference type="eggNOG" id="ENOG502QQYK">
    <property type="taxonomic scope" value="Eukaryota"/>
</dbReference>
<dbReference type="GeneTree" id="ENSGT01030000234592"/>
<dbReference type="HOGENOM" id="CLU_035817_0_0_1"/>
<dbReference type="InParanoid" id="O94919"/>
<dbReference type="OMA" id="HVKICQQ"/>
<dbReference type="OrthoDB" id="8572289at2759"/>
<dbReference type="PAN-GO" id="O94919">
    <property type="GO annotations" value="0 GO annotations based on evolutionary models"/>
</dbReference>
<dbReference type="PhylomeDB" id="O94919"/>
<dbReference type="TreeFam" id="TF333322"/>
<dbReference type="PathwayCommons" id="O94919"/>
<dbReference type="Reactome" id="R-HSA-114608">
    <property type="pathway name" value="Platelet degranulation"/>
</dbReference>
<dbReference type="SignaLink" id="O94919"/>
<dbReference type="BioGRID-ORCS" id="23052">
    <property type="hits" value="12 hits in 1158 CRISPR screens"/>
</dbReference>
<dbReference type="ChiTaRS" id="ENDOD1">
    <property type="organism name" value="human"/>
</dbReference>
<dbReference type="GenomeRNAi" id="23052"/>
<dbReference type="Pharos" id="O94919">
    <property type="development level" value="Tdark"/>
</dbReference>
<dbReference type="PRO" id="PR:O94919"/>
<dbReference type="Proteomes" id="UP000005640">
    <property type="component" value="Chromosome 11"/>
</dbReference>
<dbReference type="RNAct" id="O94919">
    <property type="molecule type" value="protein"/>
</dbReference>
<dbReference type="Bgee" id="ENSG00000149218">
    <property type="expression patterns" value="Expressed in dorsal root ganglion and 205 other cell types or tissues"/>
</dbReference>
<dbReference type="GO" id="GO:0005829">
    <property type="term" value="C:cytosol"/>
    <property type="evidence" value="ECO:0000304"/>
    <property type="project" value="Reactome"/>
</dbReference>
<dbReference type="GO" id="GO:0070062">
    <property type="term" value="C:extracellular exosome"/>
    <property type="evidence" value="ECO:0007005"/>
    <property type="project" value="UniProtKB"/>
</dbReference>
<dbReference type="GO" id="GO:0005576">
    <property type="term" value="C:extracellular region"/>
    <property type="evidence" value="ECO:0000304"/>
    <property type="project" value="Reactome"/>
</dbReference>
<dbReference type="GO" id="GO:0016020">
    <property type="term" value="C:membrane"/>
    <property type="evidence" value="ECO:0007005"/>
    <property type="project" value="UniProtKB"/>
</dbReference>
<dbReference type="GO" id="GO:0004519">
    <property type="term" value="F:endonuclease activity"/>
    <property type="evidence" value="ECO:0007669"/>
    <property type="project" value="UniProtKB-KW"/>
</dbReference>
<dbReference type="GO" id="GO:0046872">
    <property type="term" value="F:metal ion binding"/>
    <property type="evidence" value="ECO:0007669"/>
    <property type="project" value="InterPro"/>
</dbReference>
<dbReference type="GO" id="GO:0003676">
    <property type="term" value="F:nucleic acid binding"/>
    <property type="evidence" value="ECO:0007669"/>
    <property type="project" value="InterPro"/>
</dbReference>
<dbReference type="GO" id="GO:0045087">
    <property type="term" value="P:innate immune response"/>
    <property type="evidence" value="ECO:0007669"/>
    <property type="project" value="UniProtKB-KW"/>
</dbReference>
<dbReference type="FunFam" id="3.40.570.10:FF:000009">
    <property type="entry name" value="Endonuclease domain containing 1"/>
    <property type="match status" value="1"/>
</dbReference>
<dbReference type="Gene3D" id="3.40.570.10">
    <property type="entry name" value="Extracellular Endonuclease, subunit A"/>
    <property type="match status" value="1"/>
</dbReference>
<dbReference type="InterPro" id="IPR044929">
    <property type="entry name" value="DNA/RNA_non-sp_Endonuclease_sf"/>
</dbReference>
<dbReference type="InterPro" id="IPR001604">
    <property type="entry name" value="Endo_G_ENPP1-like_dom"/>
</dbReference>
<dbReference type="InterPro" id="IPR039015">
    <property type="entry name" value="ENDOD1"/>
</dbReference>
<dbReference type="InterPro" id="IPR020821">
    <property type="entry name" value="ENPP1-3/EXOG-like_nuc-like"/>
</dbReference>
<dbReference type="InterPro" id="IPR044925">
    <property type="entry name" value="His-Me_finger_sf"/>
</dbReference>
<dbReference type="PANTHER" id="PTHR21472:SF8">
    <property type="entry name" value="ENDONUCLEASE DOMAIN-CONTAINING 1 PROTEIN"/>
    <property type="match status" value="1"/>
</dbReference>
<dbReference type="PANTHER" id="PTHR21472">
    <property type="entry name" value="ENDONUCLEASE DOMAIN-CONTAINING 1 PROTEIN ENDOD1"/>
    <property type="match status" value="1"/>
</dbReference>
<dbReference type="Pfam" id="PF01223">
    <property type="entry name" value="Endonuclease_NS"/>
    <property type="match status" value="1"/>
</dbReference>
<dbReference type="SMART" id="SM00892">
    <property type="entry name" value="Endonuclease_NS"/>
    <property type="match status" value="1"/>
</dbReference>
<dbReference type="SMART" id="SM00477">
    <property type="entry name" value="NUC"/>
    <property type="match status" value="1"/>
</dbReference>
<dbReference type="SUPFAM" id="SSF54060">
    <property type="entry name" value="His-Me finger endonucleases"/>
    <property type="match status" value="1"/>
</dbReference>
<gene>
    <name type="primary">ENDOD1</name>
    <name type="synonym">KIAA0830</name>
</gene>
<name>ENDD1_HUMAN</name>
<protein>
    <recommendedName>
        <fullName>Endonuclease domain-containing 1 protein</fullName>
        <ecNumber>3.1.30.-</ecNumber>
    </recommendedName>
</protein>
<keyword id="KW-0007">Acetylation</keyword>
<keyword id="KW-0255">Endonuclease</keyword>
<keyword id="KW-0378">Hydrolase</keyword>
<keyword id="KW-0391">Immunity</keyword>
<keyword id="KW-0399">Innate immunity</keyword>
<keyword id="KW-0540">Nuclease</keyword>
<keyword id="KW-1267">Proteomics identification</keyword>
<keyword id="KW-1185">Reference proteome</keyword>
<keyword id="KW-0964">Secreted</keyword>
<keyword id="KW-0732">Signal</keyword>
<comment type="function">
    <text evidence="3">May act as a DNase and a RNase. Plays a role in the modulation of innate immune signaling through the cGAS-STING pathway by interacting with RNF26.</text>
</comment>
<comment type="subunit">
    <text evidence="3">Interacts with RNF26; this interaction is important to modulate innate immune signaling through the cGAS-STING pathway (PubMed:32614325).</text>
</comment>
<comment type="interaction">
    <interactant intactId="EBI-6163734">
        <id>O94919</id>
    </interactant>
    <interactant intactId="EBI-740943">
        <id>P62760</id>
        <label>VSNL1</label>
    </interactant>
    <organismsDiffer>false</organismsDiffer>
    <experiments>3</experiments>
</comment>
<comment type="subcellular location">
    <subcellularLocation>
        <location evidence="4">Secreted</location>
    </subcellularLocation>
</comment>
<comment type="similarity">
    <text evidence="4">Belongs to the DNA/RNA non-specific endonuclease family.</text>
</comment>
<comment type="sequence caution" evidence="4">
    <conflict type="erroneous initiation">
        <sequence resource="EMBL-CDS" id="BAA74853"/>
    </conflict>
</comment>